<keyword id="KW-0067">ATP-binding</keyword>
<keyword id="KW-0963">Cytoplasm</keyword>
<keyword id="KW-0275">Fatty acid biosynthesis</keyword>
<keyword id="KW-0276">Fatty acid metabolism</keyword>
<keyword id="KW-0444">Lipid biosynthesis</keyword>
<keyword id="KW-0443">Lipid metabolism</keyword>
<keyword id="KW-0479">Metal-binding</keyword>
<keyword id="KW-0547">Nucleotide-binding</keyword>
<keyword id="KW-0808">Transferase</keyword>
<keyword id="KW-0862">Zinc</keyword>
<keyword id="KW-0863">Zinc-finger</keyword>
<reference key="1">
    <citation type="submission" date="2007-11" db="EMBL/GenBank/DDBJ databases">
        <authorList>
            <consortium name="The Salmonella enterica serovar Paratyphi B Genome Sequencing Project"/>
            <person name="McClelland M."/>
            <person name="Sanderson E.K."/>
            <person name="Porwollik S."/>
            <person name="Spieth J."/>
            <person name="Clifton W.S."/>
            <person name="Fulton R."/>
            <person name="Cordes M."/>
            <person name="Wollam A."/>
            <person name="Shah N."/>
            <person name="Pepin K."/>
            <person name="Bhonagiri V."/>
            <person name="Nash W."/>
            <person name="Johnson M."/>
            <person name="Thiruvilangam P."/>
            <person name="Wilson R."/>
        </authorList>
    </citation>
    <scope>NUCLEOTIDE SEQUENCE [LARGE SCALE GENOMIC DNA]</scope>
    <source>
        <strain>ATCC BAA-1250 / SPB7</strain>
    </source>
</reference>
<name>ACCD_SALPB</name>
<sequence>MSWIERIKSNITPTRKASIPEGVWTKCDSCGQVLYRAELERNLEVCPKCDHHMRMSARNRLHSLLDEGSLVELGSELEPKDVLKFRDSKKYKDRLASAQKETGEKDALVVMKGTLHGMPVVAAAFEFAFMGGSMGSVVGARFVRAVEQALEDNCPLVCFSASGGARMQEALMSLMQMAKTSAALAKMQERGLPYISVLTDPTMGGVSASFAMLGDLNIAEPKALIGFAGPRVIEQTVREKLPPGFQRSEFLIEKGAIDMIVRRPEMRLKLASILAKLMNLPAPNPDAPREGVVVPPAPDQESEA</sequence>
<dbReference type="EC" id="2.1.3.15" evidence="1"/>
<dbReference type="EMBL" id="CP000886">
    <property type="protein sequence ID" value="ABX66030.1"/>
    <property type="status" value="ALT_INIT"/>
    <property type="molecule type" value="Genomic_DNA"/>
</dbReference>
<dbReference type="RefSeq" id="WP_000118383.1">
    <property type="nucleotide sequence ID" value="NC_010102.1"/>
</dbReference>
<dbReference type="SMR" id="A9N478"/>
<dbReference type="KEGG" id="spq:SPAB_00604"/>
<dbReference type="PATRIC" id="fig|1016998.12.peg.565"/>
<dbReference type="HOGENOM" id="CLU_015486_1_3_6"/>
<dbReference type="BioCyc" id="SENT1016998:SPAB_RS02500-MONOMER"/>
<dbReference type="UniPathway" id="UPA00655">
    <property type="reaction ID" value="UER00711"/>
</dbReference>
<dbReference type="Proteomes" id="UP000008556">
    <property type="component" value="Chromosome"/>
</dbReference>
<dbReference type="GO" id="GO:0009329">
    <property type="term" value="C:acetate CoA-transferase complex"/>
    <property type="evidence" value="ECO:0007669"/>
    <property type="project" value="TreeGrafter"/>
</dbReference>
<dbReference type="GO" id="GO:0003989">
    <property type="term" value="F:acetyl-CoA carboxylase activity"/>
    <property type="evidence" value="ECO:0007669"/>
    <property type="project" value="InterPro"/>
</dbReference>
<dbReference type="GO" id="GO:0005524">
    <property type="term" value="F:ATP binding"/>
    <property type="evidence" value="ECO:0007669"/>
    <property type="project" value="UniProtKB-KW"/>
</dbReference>
<dbReference type="GO" id="GO:0016743">
    <property type="term" value="F:carboxyl- or carbamoyltransferase activity"/>
    <property type="evidence" value="ECO:0007669"/>
    <property type="project" value="UniProtKB-UniRule"/>
</dbReference>
<dbReference type="GO" id="GO:0008270">
    <property type="term" value="F:zinc ion binding"/>
    <property type="evidence" value="ECO:0007669"/>
    <property type="project" value="UniProtKB-UniRule"/>
</dbReference>
<dbReference type="GO" id="GO:0006633">
    <property type="term" value="P:fatty acid biosynthetic process"/>
    <property type="evidence" value="ECO:0007669"/>
    <property type="project" value="UniProtKB-KW"/>
</dbReference>
<dbReference type="GO" id="GO:2001295">
    <property type="term" value="P:malonyl-CoA biosynthetic process"/>
    <property type="evidence" value="ECO:0007669"/>
    <property type="project" value="UniProtKB-UniRule"/>
</dbReference>
<dbReference type="FunFam" id="3.90.226.10:FF:000013">
    <property type="entry name" value="Acetyl-coenzyme A carboxylase carboxyl transferase subunit beta"/>
    <property type="match status" value="1"/>
</dbReference>
<dbReference type="Gene3D" id="3.90.226.10">
    <property type="entry name" value="2-enoyl-CoA Hydratase, Chain A, domain 1"/>
    <property type="match status" value="1"/>
</dbReference>
<dbReference type="HAMAP" id="MF_01395">
    <property type="entry name" value="AcetylCoA_CT_beta"/>
    <property type="match status" value="1"/>
</dbReference>
<dbReference type="InterPro" id="IPR034733">
    <property type="entry name" value="AcCoA_carboxyl_beta"/>
</dbReference>
<dbReference type="InterPro" id="IPR000438">
    <property type="entry name" value="Acetyl_CoA_COase_Trfase_b_su"/>
</dbReference>
<dbReference type="InterPro" id="IPR029045">
    <property type="entry name" value="ClpP/crotonase-like_dom_sf"/>
</dbReference>
<dbReference type="InterPro" id="IPR011762">
    <property type="entry name" value="COA_CT_N"/>
</dbReference>
<dbReference type="InterPro" id="IPR041010">
    <property type="entry name" value="Znf-ACC"/>
</dbReference>
<dbReference type="NCBIfam" id="TIGR00515">
    <property type="entry name" value="accD"/>
    <property type="match status" value="1"/>
</dbReference>
<dbReference type="PANTHER" id="PTHR42995">
    <property type="entry name" value="ACETYL-COENZYME A CARBOXYLASE CARBOXYL TRANSFERASE SUBUNIT BETA, CHLOROPLASTIC"/>
    <property type="match status" value="1"/>
</dbReference>
<dbReference type="PANTHER" id="PTHR42995:SF5">
    <property type="entry name" value="ACETYL-COENZYME A CARBOXYLASE CARBOXYL TRANSFERASE SUBUNIT BETA, CHLOROPLASTIC"/>
    <property type="match status" value="1"/>
</dbReference>
<dbReference type="Pfam" id="PF01039">
    <property type="entry name" value="Carboxyl_trans"/>
    <property type="match status" value="1"/>
</dbReference>
<dbReference type="Pfam" id="PF17848">
    <property type="entry name" value="Zn_ribbon_ACC"/>
    <property type="match status" value="1"/>
</dbReference>
<dbReference type="PRINTS" id="PR01070">
    <property type="entry name" value="ACCCTRFRASEB"/>
</dbReference>
<dbReference type="SUPFAM" id="SSF52096">
    <property type="entry name" value="ClpP/crotonase"/>
    <property type="match status" value="1"/>
</dbReference>
<dbReference type="PROSITE" id="PS50980">
    <property type="entry name" value="COA_CT_NTER"/>
    <property type="match status" value="1"/>
</dbReference>
<gene>
    <name evidence="1" type="primary">accD</name>
    <name type="ordered locus">SPAB_00604</name>
</gene>
<accession>A9N478</accession>
<evidence type="ECO:0000255" key="1">
    <source>
        <dbReference type="HAMAP-Rule" id="MF_01395"/>
    </source>
</evidence>
<evidence type="ECO:0000255" key="2">
    <source>
        <dbReference type="PROSITE-ProRule" id="PRU01136"/>
    </source>
</evidence>
<evidence type="ECO:0000256" key="3">
    <source>
        <dbReference type="SAM" id="MobiDB-lite"/>
    </source>
</evidence>
<evidence type="ECO:0000305" key="4"/>
<comment type="function">
    <text evidence="1">Component of the acetyl coenzyme A carboxylase (ACC) complex. Biotin carboxylase (BC) catalyzes the carboxylation of biotin on its carrier protein (BCCP) and then the CO(2) group is transferred by the transcarboxylase to acetyl-CoA to form malonyl-CoA.</text>
</comment>
<comment type="catalytic activity">
    <reaction evidence="1">
        <text>N(6)-carboxybiotinyl-L-lysyl-[protein] + acetyl-CoA = N(6)-biotinyl-L-lysyl-[protein] + malonyl-CoA</text>
        <dbReference type="Rhea" id="RHEA:54728"/>
        <dbReference type="Rhea" id="RHEA-COMP:10505"/>
        <dbReference type="Rhea" id="RHEA-COMP:10506"/>
        <dbReference type="ChEBI" id="CHEBI:57288"/>
        <dbReference type="ChEBI" id="CHEBI:57384"/>
        <dbReference type="ChEBI" id="CHEBI:83144"/>
        <dbReference type="ChEBI" id="CHEBI:83145"/>
        <dbReference type="EC" id="2.1.3.15"/>
    </reaction>
</comment>
<comment type="pathway">
    <text evidence="1">Lipid metabolism; malonyl-CoA biosynthesis; malonyl-CoA from acetyl-CoA: step 1/1.</text>
</comment>
<comment type="subunit">
    <text evidence="1">Acetyl-CoA carboxylase is a heterohexamer composed of biotin carboxyl carrier protein (AccB), biotin carboxylase (AccC) and two subunits each of ACCase subunit alpha (AccA) and ACCase subunit beta (AccD).</text>
</comment>
<comment type="subcellular location">
    <subcellularLocation>
        <location evidence="1">Cytoplasm</location>
    </subcellularLocation>
</comment>
<comment type="similarity">
    <text evidence="1">Belongs to the AccD/PCCB family.</text>
</comment>
<comment type="sequence caution" evidence="4">
    <conflict type="erroneous initiation">
        <sequence resource="EMBL-CDS" id="ABX66030"/>
    </conflict>
    <text>Truncated N-terminus.</text>
</comment>
<proteinExistence type="inferred from homology"/>
<feature type="chain" id="PRO_0000359058" description="Acetyl-coenzyme A carboxylase carboxyl transferase subunit beta">
    <location>
        <begin position="1"/>
        <end position="304"/>
    </location>
</feature>
<feature type="domain" description="CoA carboxyltransferase N-terminal" evidence="2">
    <location>
        <begin position="23"/>
        <end position="292"/>
    </location>
</feature>
<feature type="zinc finger region" description="C4-type" evidence="1">
    <location>
        <begin position="27"/>
        <end position="49"/>
    </location>
</feature>
<feature type="region of interest" description="Disordered" evidence="3">
    <location>
        <begin position="283"/>
        <end position="304"/>
    </location>
</feature>
<feature type="binding site" evidence="1">
    <location>
        <position position="27"/>
    </location>
    <ligand>
        <name>Zn(2+)</name>
        <dbReference type="ChEBI" id="CHEBI:29105"/>
    </ligand>
</feature>
<feature type="binding site" evidence="1">
    <location>
        <position position="30"/>
    </location>
    <ligand>
        <name>Zn(2+)</name>
        <dbReference type="ChEBI" id="CHEBI:29105"/>
    </ligand>
</feature>
<feature type="binding site" evidence="1">
    <location>
        <position position="46"/>
    </location>
    <ligand>
        <name>Zn(2+)</name>
        <dbReference type="ChEBI" id="CHEBI:29105"/>
    </ligand>
</feature>
<feature type="binding site" evidence="1">
    <location>
        <position position="49"/>
    </location>
    <ligand>
        <name>Zn(2+)</name>
        <dbReference type="ChEBI" id="CHEBI:29105"/>
    </ligand>
</feature>
<organism>
    <name type="scientific">Salmonella paratyphi B (strain ATCC BAA-1250 / SPB7)</name>
    <dbReference type="NCBI Taxonomy" id="1016998"/>
    <lineage>
        <taxon>Bacteria</taxon>
        <taxon>Pseudomonadati</taxon>
        <taxon>Pseudomonadota</taxon>
        <taxon>Gammaproteobacteria</taxon>
        <taxon>Enterobacterales</taxon>
        <taxon>Enterobacteriaceae</taxon>
        <taxon>Salmonella</taxon>
    </lineage>
</organism>
<protein>
    <recommendedName>
        <fullName evidence="1">Acetyl-coenzyme A carboxylase carboxyl transferase subunit beta</fullName>
        <shortName evidence="1">ACCase subunit beta</shortName>
        <shortName evidence="1">Acetyl-CoA carboxylase carboxyltransferase subunit beta</shortName>
        <ecNumber evidence="1">2.1.3.15</ecNumber>
    </recommendedName>
</protein>